<organism>
    <name type="scientific">Shigella flexneri</name>
    <dbReference type="NCBI Taxonomy" id="623"/>
    <lineage>
        <taxon>Bacteria</taxon>
        <taxon>Pseudomonadati</taxon>
        <taxon>Pseudomonadota</taxon>
        <taxon>Gammaproteobacteria</taxon>
        <taxon>Enterobacterales</taxon>
        <taxon>Enterobacteriaceae</taxon>
        <taxon>Shigella</taxon>
    </lineage>
</organism>
<reference key="1">
    <citation type="journal article" date="2002" name="Nucleic Acids Res.">
        <title>Genome sequence of Shigella flexneri 2a: insights into pathogenicity through comparison with genomes of Escherichia coli K12 and O157.</title>
        <authorList>
            <person name="Jin Q."/>
            <person name="Yuan Z."/>
            <person name="Xu J."/>
            <person name="Wang Y."/>
            <person name="Shen Y."/>
            <person name="Lu W."/>
            <person name="Wang J."/>
            <person name="Liu H."/>
            <person name="Yang J."/>
            <person name="Yang F."/>
            <person name="Zhang X."/>
            <person name="Zhang J."/>
            <person name="Yang G."/>
            <person name="Wu H."/>
            <person name="Qu D."/>
            <person name="Dong J."/>
            <person name="Sun L."/>
            <person name="Xue Y."/>
            <person name="Zhao A."/>
            <person name="Gao Y."/>
            <person name="Zhu J."/>
            <person name="Kan B."/>
            <person name="Ding K."/>
            <person name="Chen S."/>
            <person name="Cheng H."/>
            <person name="Yao Z."/>
            <person name="He B."/>
            <person name="Chen R."/>
            <person name="Ma D."/>
            <person name="Qiang B."/>
            <person name="Wen Y."/>
            <person name="Hou Y."/>
            <person name="Yu J."/>
        </authorList>
    </citation>
    <scope>NUCLEOTIDE SEQUENCE [LARGE SCALE GENOMIC DNA]</scope>
    <source>
        <strain>301 / Serotype 2a</strain>
    </source>
</reference>
<reference key="2">
    <citation type="journal article" date="2003" name="Infect. Immun.">
        <title>Complete genome sequence and comparative genomics of Shigella flexneri serotype 2a strain 2457T.</title>
        <authorList>
            <person name="Wei J."/>
            <person name="Goldberg M.B."/>
            <person name="Burland V."/>
            <person name="Venkatesan M.M."/>
            <person name="Deng W."/>
            <person name="Fournier G."/>
            <person name="Mayhew G.F."/>
            <person name="Plunkett G. III"/>
            <person name="Rose D.J."/>
            <person name="Darling A."/>
            <person name="Mau B."/>
            <person name="Perna N.T."/>
            <person name="Payne S.M."/>
            <person name="Runyen-Janecky L.J."/>
            <person name="Zhou S."/>
            <person name="Schwartz D.C."/>
            <person name="Blattner F.R."/>
        </authorList>
    </citation>
    <scope>NUCLEOTIDE SEQUENCE [LARGE SCALE GENOMIC DNA]</scope>
    <source>
        <strain>ATCC 700930 / 2457T / Serotype 2a</strain>
    </source>
</reference>
<gene>
    <name type="primary">potC</name>
    <name type="ordered locus">SF1126</name>
    <name type="ordered locus">S1206</name>
</gene>
<keyword id="KW-0997">Cell inner membrane</keyword>
<keyword id="KW-1003">Cell membrane</keyword>
<keyword id="KW-0472">Membrane</keyword>
<keyword id="KW-1185">Reference proteome</keyword>
<keyword id="KW-0812">Transmembrane</keyword>
<keyword id="KW-1133">Transmembrane helix</keyword>
<keyword id="KW-0813">Transport</keyword>
<proteinExistence type="inferred from homology"/>
<feature type="chain" id="PRO_0000060187" description="Spermidine/putrescine transport system permease protein PotC">
    <location>
        <begin position="1"/>
        <end position="264"/>
    </location>
</feature>
<feature type="transmembrane region" description="Helical" evidence="2">
    <location>
        <begin position="10"/>
        <end position="30"/>
    </location>
</feature>
<feature type="transmembrane region" description="Helical" evidence="2">
    <location>
        <begin position="66"/>
        <end position="86"/>
    </location>
</feature>
<feature type="transmembrane region" description="Helical" evidence="2">
    <location>
        <begin position="109"/>
        <end position="129"/>
    </location>
</feature>
<feature type="transmembrane region" description="Helical" evidence="2">
    <location>
        <begin position="131"/>
        <end position="151"/>
    </location>
</feature>
<feature type="transmembrane region" description="Helical" evidence="2">
    <location>
        <begin position="176"/>
        <end position="196"/>
    </location>
</feature>
<feature type="transmembrane region" description="Helical" evidence="2">
    <location>
        <begin position="232"/>
        <end position="252"/>
    </location>
</feature>
<feature type="domain" description="ABC transmembrane type-1" evidence="2">
    <location>
        <begin position="60"/>
        <end position="248"/>
    </location>
</feature>
<feature type="sequence conflict" description="In Ref. 2; AAP16633." evidence="3" ref="2">
    <original>G</original>
    <variation>T</variation>
    <location>
        <position position="260"/>
    </location>
</feature>
<dbReference type="EMBL" id="AE005674">
    <property type="protein sequence ID" value="AAN42744.1"/>
    <property type="molecule type" value="Genomic_DNA"/>
</dbReference>
<dbReference type="EMBL" id="AE014073">
    <property type="protein sequence ID" value="AAP16633.1"/>
    <property type="molecule type" value="Genomic_DNA"/>
</dbReference>
<dbReference type="RefSeq" id="NP_707037.1">
    <property type="nucleotide sequence ID" value="NC_004337.2"/>
</dbReference>
<dbReference type="RefSeq" id="WP_000580313.1">
    <property type="nucleotide sequence ID" value="NZ_CP123365.1"/>
</dbReference>
<dbReference type="SMR" id="Q83RR7"/>
<dbReference type="STRING" id="198214.SF1126"/>
<dbReference type="PaxDb" id="198214-SF1126"/>
<dbReference type="GeneID" id="1024056"/>
<dbReference type="KEGG" id="sfl:SF1126"/>
<dbReference type="KEGG" id="sfx:S1206"/>
<dbReference type="PATRIC" id="fig|198214.7.peg.1317"/>
<dbReference type="HOGENOM" id="CLU_016047_3_0_6"/>
<dbReference type="Proteomes" id="UP000001006">
    <property type="component" value="Chromosome"/>
</dbReference>
<dbReference type="Proteomes" id="UP000002673">
    <property type="component" value="Chromosome"/>
</dbReference>
<dbReference type="GO" id="GO:0005886">
    <property type="term" value="C:plasma membrane"/>
    <property type="evidence" value="ECO:0007669"/>
    <property type="project" value="UniProtKB-SubCell"/>
</dbReference>
<dbReference type="GO" id="GO:0055085">
    <property type="term" value="P:transmembrane transport"/>
    <property type="evidence" value="ECO:0007669"/>
    <property type="project" value="InterPro"/>
</dbReference>
<dbReference type="CDD" id="cd06261">
    <property type="entry name" value="TM_PBP2"/>
    <property type="match status" value="1"/>
</dbReference>
<dbReference type="FunFam" id="1.10.3720.10:FF:000013">
    <property type="entry name" value="Spermidine/putrescine ABC transporter permease PotC"/>
    <property type="match status" value="1"/>
</dbReference>
<dbReference type="Gene3D" id="1.10.3720.10">
    <property type="entry name" value="MetI-like"/>
    <property type="match status" value="1"/>
</dbReference>
<dbReference type="InterPro" id="IPR051789">
    <property type="entry name" value="Bact_Polyamine_Transport"/>
</dbReference>
<dbReference type="InterPro" id="IPR000515">
    <property type="entry name" value="MetI-like"/>
</dbReference>
<dbReference type="InterPro" id="IPR035906">
    <property type="entry name" value="MetI-like_sf"/>
</dbReference>
<dbReference type="NCBIfam" id="NF007047">
    <property type="entry name" value="PRK09500.1"/>
    <property type="match status" value="1"/>
</dbReference>
<dbReference type="PANTHER" id="PTHR43848">
    <property type="entry name" value="PUTRESCINE TRANSPORT SYSTEM PERMEASE PROTEIN POTI"/>
    <property type="match status" value="1"/>
</dbReference>
<dbReference type="PANTHER" id="PTHR43848:SF5">
    <property type="entry name" value="SPERMIDINE_PUTRESCINE TRANSPORT SYSTEM PERMEASE PROTEIN POTC"/>
    <property type="match status" value="1"/>
</dbReference>
<dbReference type="Pfam" id="PF00528">
    <property type="entry name" value="BPD_transp_1"/>
    <property type="match status" value="1"/>
</dbReference>
<dbReference type="SUPFAM" id="SSF161098">
    <property type="entry name" value="MetI-like"/>
    <property type="match status" value="1"/>
</dbReference>
<dbReference type="PROSITE" id="PS50928">
    <property type="entry name" value="ABC_TM1"/>
    <property type="match status" value="1"/>
</dbReference>
<protein>
    <recommendedName>
        <fullName>Spermidine/putrescine transport system permease protein PotC</fullName>
    </recommendedName>
</protein>
<comment type="function">
    <text evidence="1">Required for the activity of the bacterial periplasmic transport system of putrescine and spermidine.</text>
</comment>
<comment type="subcellular location">
    <subcellularLocation>
        <location evidence="1">Cell inner membrane</location>
        <topology evidence="2">Multi-pass membrane protein</topology>
    </subcellularLocation>
</comment>
<comment type="similarity">
    <text evidence="3">Belongs to the binding-protein-dependent transport system permease family. CysTW subfamily.</text>
</comment>
<name>POTC_SHIFL</name>
<sequence>MIGRLLRGGFMTAIYAYLYIPIIILIVNSFNSSRFGINWQGFTTKWYSLLMNNDSLLQAAQHSLTMAVFSATFATLIGSLTAVALYRYRFRGKPFVSGMLFVVMMSPDIVMAISLLVLFMLLGIQLGFWSLLFSHITFCLPFVVVTVYSRLKGFDVRMLEAAKDLGASEFTILRKIILPLAMPAVAAGWVLSFTLSMDDVVVSSFVTGPSYEILPLKIYSMVKVGVSPEVNALATILLVLSLVMVIASQLIARDKTKGNGGDVK</sequence>
<accession>Q83RR7</accession>
<evidence type="ECO:0000250" key="1"/>
<evidence type="ECO:0000255" key="2">
    <source>
        <dbReference type="PROSITE-ProRule" id="PRU00441"/>
    </source>
</evidence>
<evidence type="ECO:0000305" key="3"/>